<accession>Q6MAG9</accession>
<dbReference type="EMBL" id="BX908798">
    <property type="protein sequence ID" value="CAF24430.1"/>
    <property type="molecule type" value="Genomic_DNA"/>
</dbReference>
<dbReference type="RefSeq" id="WP_011176251.1">
    <property type="nucleotide sequence ID" value="NC_005861.2"/>
</dbReference>
<dbReference type="SMR" id="Q6MAG9"/>
<dbReference type="STRING" id="264201.pc1706"/>
<dbReference type="KEGG" id="pcu:PC_RS08170"/>
<dbReference type="eggNOG" id="COG1195">
    <property type="taxonomic scope" value="Bacteria"/>
</dbReference>
<dbReference type="HOGENOM" id="CLU_040267_0_1_0"/>
<dbReference type="OrthoDB" id="9803889at2"/>
<dbReference type="Proteomes" id="UP000000529">
    <property type="component" value="Chromosome"/>
</dbReference>
<dbReference type="GO" id="GO:0005737">
    <property type="term" value="C:cytoplasm"/>
    <property type="evidence" value="ECO:0007669"/>
    <property type="project" value="UniProtKB-SubCell"/>
</dbReference>
<dbReference type="GO" id="GO:0005524">
    <property type="term" value="F:ATP binding"/>
    <property type="evidence" value="ECO:0007669"/>
    <property type="project" value="UniProtKB-UniRule"/>
</dbReference>
<dbReference type="GO" id="GO:0003697">
    <property type="term" value="F:single-stranded DNA binding"/>
    <property type="evidence" value="ECO:0007669"/>
    <property type="project" value="UniProtKB-UniRule"/>
</dbReference>
<dbReference type="GO" id="GO:0006260">
    <property type="term" value="P:DNA replication"/>
    <property type="evidence" value="ECO:0007669"/>
    <property type="project" value="UniProtKB-UniRule"/>
</dbReference>
<dbReference type="GO" id="GO:0000731">
    <property type="term" value="P:DNA synthesis involved in DNA repair"/>
    <property type="evidence" value="ECO:0007669"/>
    <property type="project" value="TreeGrafter"/>
</dbReference>
<dbReference type="GO" id="GO:0006302">
    <property type="term" value="P:double-strand break repair"/>
    <property type="evidence" value="ECO:0007669"/>
    <property type="project" value="TreeGrafter"/>
</dbReference>
<dbReference type="GO" id="GO:0009432">
    <property type="term" value="P:SOS response"/>
    <property type="evidence" value="ECO:0007669"/>
    <property type="project" value="UniProtKB-UniRule"/>
</dbReference>
<dbReference type="Gene3D" id="3.40.50.300">
    <property type="entry name" value="P-loop containing nucleotide triphosphate hydrolases"/>
    <property type="match status" value="1"/>
</dbReference>
<dbReference type="Gene3D" id="1.20.1050.90">
    <property type="entry name" value="RecF/RecN/SMC, N-terminal domain"/>
    <property type="match status" value="1"/>
</dbReference>
<dbReference type="HAMAP" id="MF_00365">
    <property type="entry name" value="RecF"/>
    <property type="match status" value="1"/>
</dbReference>
<dbReference type="InterPro" id="IPR001238">
    <property type="entry name" value="DNA-binding_RecF"/>
</dbReference>
<dbReference type="InterPro" id="IPR018078">
    <property type="entry name" value="DNA-binding_RecF_CS"/>
</dbReference>
<dbReference type="InterPro" id="IPR027417">
    <property type="entry name" value="P-loop_NTPase"/>
</dbReference>
<dbReference type="InterPro" id="IPR003395">
    <property type="entry name" value="RecF/RecN/SMC_N"/>
</dbReference>
<dbReference type="InterPro" id="IPR042174">
    <property type="entry name" value="RecF_2"/>
</dbReference>
<dbReference type="NCBIfam" id="TIGR00611">
    <property type="entry name" value="recf"/>
    <property type="match status" value="1"/>
</dbReference>
<dbReference type="PANTHER" id="PTHR32182">
    <property type="entry name" value="DNA REPLICATION AND REPAIR PROTEIN RECF"/>
    <property type="match status" value="1"/>
</dbReference>
<dbReference type="PANTHER" id="PTHR32182:SF0">
    <property type="entry name" value="DNA REPLICATION AND REPAIR PROTEIN RECF"/>
    <property type="match status" value="1"/>
</dbReference>
<dbReference type="Pfam" id="PF02463">
    <property type="entry name" value="SMC_N"/>
    <property type="match status" value="1"/>
</dbReference>
<dbReference type="SUPFAM" id="SSF52540">
    <property type="entry name" value="P-loop containing nucleoside triphosphate hydrolases"/>
    <property type="match status" value="1"/>
</dbReference>
<dbReference type="PROSITE" id="PS00617">
    <property type="entry name" value="RECF_1"/>
    <property type="match status" value="1"/>
</dbReference>
<keyword id="KW-0067">ATP-binding</keyword>
<keyword id="KW-0963">Cytoplasm</keyword>
<keyword id="KW-0227">DNA damage</keyword>
<keyword id="KW-0234">DNA repair</keyword>
<keyword id="KW-0235">DNA replication</keyword>
<keyword id="KW-0238">DNA-binding</keyword>
<keyword id="KW-0547">Nucleotide-binding</keyword>
<keyword id="KW-1185">Reference proteome</keyword>
<keyword id="KW-0742">SOS response</keyword>
<comment type="function">
    <text evidence="1">The RecF protein is involved in DNA metabolism; it is required for DNA replication and normal SOS inducibility. RecF binds preferentially to single-stranded, linear DNA. It also seems to bind ATP.</text>
</comment>
<comment type="subcellular location">
    <subcellularLocation>
        <location evidence="1">Cytoplasm</location>
    </subcellularLocation>
</comment>
<comment type="similarity">
    <text evidence="1">Belongs to the RecF family.</text>
</comment>
<organism>
    <name type="scientific">Protochlamydia amoebophila (strain UWE25)</name>
    <dbReference type="NCBI Taxonomy" id="264201"/>
    <lineage>
        <taxon>Bacteria</taxon>
        <taxon>Pseudomonadati</taxon>
        <taxon>Chlamydiota</taxon>
        <taxon>Chlamydiia</taxon>
        <taxon>Parachlamydiales</taxon>
        <taxon>Parachlamydiaceae</taxon>
        <taxon>Candidatus Protochlamydia</taxon>
    </lineage>
</organism>
<protein>
    <recommendedName>
        <fullName evidence="1">DNA replication and repair protein RecF</fullName>
    </recommendedName>
</protein>
<evidence type="ECO:0000255" key="1">
    <source>
        <dbReference type="HAMAP-Rule" id="MF_00365"/>
    </source>
</evidence>
<gene>
    <name evidence="1" type="primary">recF</name>
    <name type="synonym">uvrF</name>
    <name type="ordered locus">pc1706</name>
</gene>
<proteinExistence type="inferred from homology"/>
<feature type="chain" id="PRO_0000196437" description="DNA replication and repair protein RecF">
    <location>
        <begin position="1"/>
        <end position="359"/>
    </location>
</feature>
<feature type="binding site" evidence="1">
    <location>
        <begin position="30"/>
        <end position="37"/>
    </location>
    <ligand>
        <name>ATP</name>
        <dbReference type="ChEBI" id="CHEBI:30616"/>
    </ligand>
</feature>
<sequence>MTLRSLYLQHFRNYEEAYLEFSPQFNLICGPNAKGKTTLLEAIHCLMIGRSFRTSHYPDLIQQQFESFFLEAQFYKHGIEQTLKFGFHTTDRKIIYNSTPLATLSNLLGLIPGVIITPDDVQLVKGSPQLRRQFLDIQIAQVDPLYVHHLNRYGRALKQRNHLLKMKQQISIDSWEQEMTHSAAYLIQQRYQTITHLQNLAQKYYHLLSGENDLLTLEYRSIANSNLSIDEIKKLLVKQLCKNRQREMQIGYTLSGPHKDDLFVAIGGRDIRYFASEGQQRSCVNALHFAEWNRLHQRGDGDFPLFMIDDIGMSLDSNRKDRLVEQLQSVGQVFLTTTDPKFLDHIDADKKIFTLPFYN</sequence>
<reference key="1">
    <citation type="journal article" date="2004" name="Science">
        <title>Illuminating the evolutionary history of chlamydiae.</title>
        <authorList>
            <person name="Horn M."/>
            <person name="Collingro A."/>
            <person name="Schmitz-Esser S."/>
            <person name="Beier C.L."/>
            <person name="Purkhold U."/>
            <person name="Fartmann B."/>
            <person name="Brandt P."/>
            <person name="Nyakatura G.J."/>
            <person name="Droege M."/>
            <person name="Frishman D."/>
            <person name="Rattei T."/>
            <person name="Mewes H.-W."/>
            <person name="Wagner M."/>
        </authorList>
    </citation>
    <scope>NUCLEOTIDE SEQUENCE [LARGE SCALE GENOMIC DNA]</scope>
    <source>
        <strain>UWE25</strain>
    </source>
</reference>
<name>RECF_PARUW</name>